<keyword id="KW-0963">Cytoplasm</keyword>
<keyword id="KW-0413">Isomerase</keyword>
<keyword id="KW-0627">Porphyrin biosynthesis</keyword>
<keyword id="KW-0663">Pyridoxal phosphate</keyword>
<keyword id="KW-1185">Reference proteome</keyword>
<dbReference type="EC" id="5.4.3.8" evidence="1"/>
<dbReference type="EMBL" id="AM180088">
    <property type="protein sequence ID" value="CAJ53544.1"/>
    <property type="molecule type" value="Genomic_DNA"/>
</dbReference>
<dbReference type="RefSeq" id="WP_011572639.1">
    <property type="nucleotide sequence ID" value="NC_008212.1"/>
</dbReference>
<dbReference type="SMR" id="Q18ES5"/>
<dbReference type="STRING" id="362976.HQ_3447A"/>
<dbReference type="GeneID" id="4194107"/>
<dbReference type="KEGG" id="hwa:HQ_3447A"/>
<dbReference type="eggNOG" id="arCOG00918">
    <property type="taxonomic scope" value="Archaea"/>
</dbReference>
<dbReference type="HOGENOM" id="CLU_016922_1_5_2"/>
<dbReference type="UniPathway" id="UPA00251">
    <property type="reaction ID" value="UER00317"/>
</dbReference>
<dbReference type="Proteomes" id="UP000001975">
    <property type="component" value="Chromosome"/>
</dbReference>
<dbReference type="GO" id="GO:0005737">
    <property type="term" value="C:cytoplasm"/>
    <property type="evidence" value="ECO:0007669"/>
    <property type="project" value="UniProtKB-SubCell"/>
</dbReference>
<dbReference type="GO" id="GO:0042286">
    <property type="term" value="F:glutamate-1-semialdehyde 2,1-aminomutase activity"/>
    <property type="evidence" value="ECO:0007669"/>
    <property type="project" value="UniProtKB-UniRule"/>
</dbReference>
<dbReference type="GO" id="GO:0030170">
    <property type="term" value="F:pyridoxal phosphate binding"/>
    <property type="evidence" value="ECO:0007669"/>
    <property type="project" value="InterPro"/>
</dbReference>
<dbReference type="GO" id="GO:0008483">
    <property type="term" value="F:transaminase activity"/>
    <property type="evidence" value="ECO:0007669"/>
    <property type="project" value="InterPro"/>
</dbReference>
<dbReference type="GO" id="GO:0006782">
    <property type="term" value="P:protoporphyrinogen IX biosynthetic process"/>
    <property type="evidence" value="ECO:0007669"/>
    <property type="project" value="UniProtKB-UniRule"/>
</dbReference>
<dbReference type="CDD" id="cd00610">
    <property type="entry name" value="OAT_like"/>
    <property type="match status" value="1"/>
</dbReference>
<dbReference type="FunFam" id="3.40.640.10:FF:000021">
    <property type="entry name" value="Glutamate-1-semialdehyde 2,1-aminomutase"/>
    <property type="match status" value="1"/>
</dbReference>
<dbReference type="Gene3D" id="3.90.1150.10">
    <property type="entry name" value="Aspartate Aminotransferase, domain 1"/>
    <property type="match status" value="1"/>
</dbReference>
<dbReference type="Gene3D" id="3.40.640.10">
    <property type="entry name" value="Type I PLP-dependent aspartate aminotransferase-like (Major domain)"/>
    <property type="match status" value="1"/>
</dbReference>
<dbReference type="HAMAP" id="MF_00375">
    <property type="entry name" value="HemL_aminotrans_3"/>
    <property type="match status" value="1"/>
</dbReference>
<dbReference type="InterPro" id="IPR004639">
    <property type="entry name" value="4pyrrol_synth_GluAld_NH2Trfase"/>
</dbReference>
<dbReference type="InterPro" id="IPR005814">
    <property type="entry name" value="Aminotrans_3"/>
</dbReference>
<dbReference type="InterPro" id="IPR049704">
    <property type="entry name" value="Aminotrans_3_PPA_site"/>
</dbReference>
<dbReference type="InterPro" id="IPR015424">
    <property type="entry name" value="PyrdxlP-dep_Trfase"/>
</dbReference>
<dbReference type="InterPro" id="IPR015421">
    <property type="entry name" value="PyrdxlP-dep_Trfase_major"/>
</dbReference>
<dbReference type="InterPro" id="IPR015422">
    <property type="entry name" value="PyrdxlP-dep_Trfase_small"/>
</dbReference>
<dbReference type="NCBIfam" id="NF000818">
    <property type="entry name" value="PRK00062.1"/>
    <property type="match status" value="1"/>
</dbReference>
<dbReference type="PANTHER" id="PTHR43713">
    <property type="entry name" value="GLUTAMATE-1-SEMIALDEHYDE 2,1-AMINOMUTASE"/>
    <property type="match status" value="1"/>
</dbReference>
<dbReference type="PANTHER" id="PTHR43713:SF3">
    <property type="entry name" value="GLUTAMATE-1-SEMIALDEHYDE 2,1-AMINOMUTASE 1, CHLOROPLASTIC-RELATED"/>
    <property type="match status" value="1"/>
</dbReference>
<dbReference type="Pfam" id="PF00202">
    <property type="entry name" value="Aminotran_3"/>
    <property type="match status" value="1"/>
</dbReference>
<dbReference type="SUPFAM" id="SSF53383">
    <property type="entry name" value="PLP-dependent transferases"/>
    <property type="match status" value="1"/>
</dbReference>
<dbReference type="PROSITE" id="PS00600">
    <property type="entry name" value="AA_TRANSFER_CLASS_3"/>
    <property type="match status" value="1"/>
</dbReference>
<accession>Q18ES5</accession>
<organism>
    <name type="scientific">Haloquadratum walsbyi (strain DSM 16790 / HBSQ001)</name>
    <dbReference type="NCBI Taxonomy" id="362976"/>
    <lineage>
        <taxon>Archaea</taxon>
        <taxon>Methanobacteriati</taxon>
        <taxon>Methanobacteriota</taxon>
        <taxon>Stenosarchaea group</taxon>
        <taxon>Halobacteria</taxon>
        <taxon>Halobacteriales</taxon>
        <taxon>Haloferacaceae</taxon>
        <taxon>Haloquadratum</taxon>
    </lineage>
</organism>
<name>GSA_HALWD</name>
<protein>
    <recommendedName>
        <fullName evidence="1">Glutamate-1-semialdehyde 2,1-aminomutase</fullName>
        <shortName evidence="1">GSA</shortName>
        <ecNumber evidence="1">5.4.3.8</ecNumber>
    </recommendedName>
    <alternativeName>
        <fullName evidence="1">Glutamate-1-semialdehyde aminotransferase</fullName>
        <shortName evidence="1">GSA-AT</shortName>
    </alternativeName>
</protein>
<reference key="1">
    <citation type="journal article" date="2006" name="BMC Genomics">
        <title>The genome of the square archaeon Haloquadratum walsbyi: life at the limits of water activity.</title>
        <authorList>
            <person name="Bolhuis H."/>
            <person name="Palm P."/>
            <person name="Wende A."/>
            <person name="Falb M."/>
            <person name="Rampp M."/>
            <person name="Rodriguez-Valera F."/>
            <person name="Pfeiffer F."/>
            <person name="Oesterhelt D."/>
        </authorList>
    </citation>
    <scope>NUCLEOTIDE SEQUENCE [LARGE SCALE GENOMIC DNA]</scope>
    <source>
        <strain>DSM 16790 / HBSQ001</strain>
    </source>
</reference>
<proteinExistence type="inferred from homology"/>
<evidence type="ECO:0000255" key="1">
    <source>
        <dbReference type="HAMAP-Rule" id="MF_00375"/>
    </source>
</evidence>
<sequence length="446" mass="48496">MTDEESRALYDRALSVMPGGVNSSVRATQPYPFFIERGDGATVIDADGTRYLDYVMGYGPLLYGHDLPEPVNAAIQSYTSEGPMYGAPTPIEVEHAEFVARHVPSVEMIRFVNSGTEATVSAVRLARGYTGRDKIVVMKGGYHGAQESTLVEGDPMHVEPSTPGIPSSFAKHTLPVPFNDLEAITTVFETHGEDIAAVLTEPILANNGIVRPVDGYLEHLRSLTTEHNSLLIFDEVITGFRVGGLGCAQSKFGVTPDVTTFGKIIGGGFPVGAIGGRADIIEHFTPSGDVFQSGTFSGHPVTMAAGYESLKYAAENDVYDHVNRLGERLRGGITDIATDQSPSAIVVGLDSMFKTVFEREGSTTDDGDVCSAGCEQRESCMRYDDCPKTGADVSSAETERWERIFWQEMRDHNIFLTANQFESQFVSYAHTDEDIDRTLEAYKSAL</sequence>
<gene>
    <name evidence="1" type="primary">hemL</name>
    <name type="ordered locus">HQ_3447A</name>
</gene>
<feature type="chain" id="PRO_0000382394" description="Glutamate-1-semialdehyde 2,1-aminomutase">
    <location>
        <begin position="1"/>
        <end position="446"/>
    </location>
</feature>
<feature type="modified residue" description="N6-(pyridoxal phosphate)lysine" evidence="1">
    <location>
        <position position="263"/>
    </location>
</feature>
<comment type="catalytic activity">
    <reaction evidence="1">
        <text>(S)-4-amino-5-oxopentanoate = 5-aminolevulinate</text>
        <dbReference type="Rhea" id="RHEA:14265"/>
        <dbReference type="ChEBI" id="CHEBI:57501"/>
        <dbReference type="ChEBI" id="CHEBI:356416"/>
        <dbReference type="EC" id="5.4.3.8"/>
    </reaction>
</comment>
<comment type="cofactor">
    <cofactor evidence="1">
        <name>pyridoxal 5'-phosphate</name>
        <dbReference type="ChEBI" id="CHEBI:597326"/>
    </cofactor>
</comment>
<comment type="pathway">
    <text evidence="1">Porphyrin-containing compound metabolism; protoporphyrin-IX biosynthesis; 5-aminolevulinate from L-glutamyl-tRNA(Glu): step 2/2.</text>
</comment>
<comment type="subcellular location">
    <subcellularLocation>
        <location evidence="1">Cytoplasm</location>
    </subcellularLocation>
</comment>
<comment type="similarity">
    <text evidence="1">Belongs to the class-III pyridoxal-phosphate-dependent aminotransferase family. HemL subfamily.</text>
</comment>